<protein>
    <recommendedName>
        <fullName>Bifunctional protein pyrR</fullName>
    </recommendedName>
    <domain>
        <recommendedName>
            <fullName>Pyrimidine operon regulatory protein</fullName>
        </recommendedName>
    </domain>
    <domain>
        <recommendedName>
            <fullName>Uracil phosphoribosyltransferase</fullName>
            <shortName>UPRTase</shortName>
            <ecNumber>2.4.2.9</ecNumber>
        </recommendedName>
    </domain>
</protein>
<feature type="chain" id="PRO_0000412181" description="Bifunctional protein pyrR">
    <location>
        <begin position="1"/>
        <end position="178"/>
    </location>
</feature>
<feature type="short sequence motif" description="PRPP-binding" evidence="1">
    <location>
        <begin position="97"/>
        <end position="109"/>
    </location>
</feature>
<feature type="binding site" evidence="1">
    <location>
        <begin position="40"/>
        <end position="41"/>
    </location>
    <ligand>
        <name>substrate</name>
    </ligand>
</feature>
<feature type="binding site" evidence="1">
    <location>
        <begin position="101"/>
        <end position="109"/>
    </location>
    <ligand>
        <name>substrate</name>
    </ligand>
</feature>
<feature type="binding site" evidence="1">
    <location>
        <position position="134"/>
    </location>
    <ligand>
        <name>substrate</name>
    </ligand>
</feature>
<feature type="sequence conflict" description="In Ref. 3; AAB61217." evidence="3" ref="3">
    <original>VD</original>
    <variation>GG</variation>
    <location>
        <begin position="100"/>
        <end position="101"/>
    </location>
</feature>
<feature type="sequence conflict" description="In Ref. 1; AAC12929." evidence="3" ref="1">
    <original>VD</original>
    <variation>AA</variation>
    <location>
        <begin position="132"/>
        <end position="133"/>
    </location>
</feature>
<dbReference type="EC" id="2.4.2.9"/>
<dbReference type="EMBL" id="AF044978">
    <property type="protein sequence ID" value="AAC12929.1"/>
    <property type="molecule type" value="Genomic_DNA"/>
</dbReference>
<dbReference type="EMBL" id="CP002621">
    <property type="protein sequence ID" value="AEA94119.1"/>
    <property type="molecule type" value="Genomic_DNA"/>
</dbReference>
<dbReference type="EMBL" id="U25091">
    <property type="protein sequence ID" value="AAB61217.1"/>
    <property type="molecule type" value="Genomic_DNA"/>
</dbReference>
<dbReference type="RefSeq" id="WP_002357409.1">
    <property type="nucleotide sequence ID" value="NZ_JAJPFL010000035.1"/>
</dbReference>
<dbReference type="SMR" id="F2MMP6"/>
<dbReference type="KEGG" id="efi:OG1RF_11432"/>
<dbReference type="HOGENOM" id="CLU_094234_2_1_9"/>
<dbReference type="GO" id="GO:0003723">
    <property type="term" value="F:RNA binding"/>
    <property type="evidence" value="ECO:0007669"/>
    <property type="project" value="UniProtKB-UniRule"/>
</dbReference>
<dbReference type="GO" id="GO:0004845">
    <property type="term" value="F:uracil phosphoribosyltransferase activity"/>
    <property type="evidence" value="ECO:0007669"/>
    <property type="project" value="UniProtKB-UniRule"/>
</dbReference>
<dbReference type="GO" id="GO:0006353">
    <property type="term" value="P:DNA-templated transcription termination"/>
    <property type="evidence" value="ECO:0007669"/>
    <property type="project" value="UniProtKB-UniRule"/>
</dbReference>
<dbReference type="CDD" id="cd06223">
    <property type="entry name" value="PRTases_typeI"/>
    <property type="match status" value="1"/>
</dbReference>
<dbReference type="FunFam" id="3.40.50.2020:FF:000020">
    <property type="entry name" value="Bifunctional protein PyrR"/>
    <property type="match status" value="1"/>
</dbReference>
<dbReference type="Gene3D" id="3.40.50.2020">
    <property type="match status" value="1"/>
</dbReference>
<dbReference type="HAMAP" id="MF_01219">
    <property type="entry name" value="PyrR"/>
    <property type="match status" value="1"/>
</dbReference>
<dbReference type="InterPro" id="IPR000836">
    <property type="entry name" value="PRibTrfase_dom"/>
</dbReference>
<dbReference type="InterPro" id="IPR029057">
    <property type="entry name" value="PRTase-like"/>
</dbReference>
<dbReference type="InterPro" id="IPR023050">
    <property type="entry name" value="PyrR"/>
</dbReference>
<dbReference type="InterPro" id="IPR050137">
    <property type="entry name" value="PyrR_bifunctional"/>
</dbReference>
<dbReference type="NCBIfam" id="NF003545">
    <property type="entry name" value="PRK05205.1-1"/>
    <property type="match status" value="1"/>
</dbReference>
<dbReference type="NCBIfam" id="NF003547">
    <property type="entry name" value="PRK05205.1-3"/>
    <property type="match status" value="1"/>
</dbReference>
<dbReference type="NCBIfam" id="NF003548">
    <property type="entry name" value="PRK05205.1-4"/>
    <property type="match status" value="1"/>
</dbReference>
<dbReference type="NCBIfam" id="NF003549">
    <property type="entry name" value="PRK05205.1-5"/>
    <property type="match status" value="1"/>
</dbReference>
<dbReference type="PANTHER" id="PTHR11608">
    <property type="entry name" value="BIFUNCTIONAL PROTEIN PYRR"/>
    <property type="match status" value="1"/>
</dbReference>
<dbReference type="PANTHER" id="PTHR11608:SF0">
    <property type="entry name" value="BIFUNCTIONAL PROTEIN PYRR"/>
    <property type="match status" value="1"/>
</dbReference>
<dbReference type="Pfam" id="PF00156">
    <property type="entry name" value="Pribosyltran"/>
    <property type="match status" value="1"/>
</dbReference>
<dbReference type="SUPFAM" id="SSF53271">
    <property type="entry name" value="PRTase-like"/>
    <property type="match status" value="1"/>
</dbReference>
<organism>
    <name type="scientific">Enterococcus faecalis (strain ATCC 47077 / OG1RF)</name>
    <dbReference type="NCBI Taxonomy" id="474186"/>
    <lineage>
        <taxon>Bacteria</taxon>
        <taxon>Bacillati</taxon>
        <taxon>Bacillota</taxon>
        <taxon>Bacilli</taxon>
        <taxon>Lactobacillales</taxon>
        <taxon>Enterococcaceae</taxon>
        <taxon>Enterococcus</taxon>
    </lineage>
</organism>
<proteinExistence type="evidence at protein level"/>
<reference key="1">
    <citation type="journal article" date="1999" name="J. Bacteriol.">
        <title>The Enterococcus faecalis pyr operon is regulated by autogenous transcriptional attenuation at a single site in the 5' leader.</title>
        <authorList>
            <person name="Ghim S.-Y."/>
            <person name="Kim C.C."/>
            <person name="Bonner E.R."/>
            <person name="D'Elia J.N."/>
            <person name="Grabner G.K."/>
            <person name="Switzer R.L."/>
        </authorList>
    </citation>
    <scope>NUCLEOTIDE SEQUENCE [GENOMIC DNA]</scope>
    <scope>FUNCTION</scope>
    <scope>CATALYTIC ACTIVITY</scope>
    <scope>BIOPHYSICOCHEMICAL PROPERTIES</scope>
    <source>
        <strain>ATCC 47077 / OG1RF</strain>
    </source>
</reference>
<reference key="2">
    <citation type="journal article" date="2008" name="Genome Biol.">
        <title>Large scale variation in Enterococcus faecalis illustrated by the genome analysis of strain OG1RF.</title>
        <authorList>
            <person name="Bourgogne A."/>
            <person name="Garsin D.A."/>
            <person name="Qin X."/>
            <person name="Singh K.V."/>
            <person name="Sillanpaa J."/>
            <person name="Yerrapragada S."/>
            <person name="Ding Y."/>
            <person name="Dugan-Rocha S."/>
            <person name="Buhay C."/>
            <person name="Shen H."/>
            <person name="Chen G."/>
            <person name="Williams G."/>
            <person name="Muzny D."/>
            <person name="Maadani A."/>
            <person name="Fox K.A."/>
            <person name="Gioia J."/>
            <person name="Chen L."/>
            <person name="Shang Y."/>
            <person name="Arias C.A."/>
            <person name="Nallapareddy S.R."/>
            <person name="Zhao M."/>
            <person name="Prakash V.P."/>
            <person name="Chowdhury S."/>
            <person name="Jiang H."/>
            <person name="Gibbs R.A."/>
            <person name="Murray B.E."/>
            <person name="Highlander S.K."/>
            <person name="Weinstock G.M."/>
        </authorList>
    </citation>
    <scope>NUCLEOTIDE SEQUENCE [LARGE SCALE GENOMIC DNA]</scope>
    <source>
        <strain>ATCC 47077 / OG1RF</strain>
    </source>
</reference>
<reference key="3">
    <citation type="journal article" date="1995" name="J. Bacteriol.">
        <title>Generation of auxotrophic mutants of Enterococcus faecalis.</title>
        <authorList>
            <person name="Li X."/>
            <person name="Weinstock G.M."/>
            <person name="Murray B.E."/>
        </authorList>
    </citation>
    <scope>NUCLEOTIDE SEQUENCE [GENOMIC DNA] OF 1-101</scope>
    <source>
        <strain>ATCC 47077 / OG1RF</strain>
    </source>
</reference>
<keyword id="KW-0328">Glycosyltransferase</keyword>
<keyword id="KW-0694">RNA-binding</keyword>
<keyword id="KW-0804">Transcription</keyword>
<keyword id="KW-0805">Transcription regulation</keyword>
<keyword id="KW-0806">Transcription termination</keyword>
<keyword id="KW-0808">Transferase</keyword>
<name>PYRR_ENTFO</name>
<comment type="function">
    <text evidence="2">Regulates transcriptional attenuation of the pyrimidine nucleotide (pyr) operon in response to exogenous pyrimidines, by binding to the anti-antiterminator region of the 5' leader on pyr mRNA. This probably favors formation of a transcription terminator hairpin, leading to a reduced expression of downstream genes.</text>
</comment>
<comment type="function">
    <text evidence="2">Also displays a weak uracil phosphoribosyltransferase activity which is not physiologically significant.</text>
</comment>
<comment type="catalytic activity">
    <reaction evidence="2">
        <text>UMP + diphosphate = 5-phospho-alpha-D-ribose 1-diphosphate + uracil</text>
        <dbReference type="Rhea" id="RHEA:13017"/>
        <dbReference type="ChEBI" id="CHEBI:17568"/>
        <dbReference type="ChEBI" id="CHEBI:33019"/>
        <dbReference type="ChEBI" id="CHEBI:57865"/>
        <dbReference type="ChEBI" id="CHEBI:58017"/>
        <dbReference type="EC" id="2.4.2.9"/>
    </reaction>
</comment>
<comment type="biophysicochemical properties">
    <phDependence>
        <text evidence="2">Optimum pH is 9.2 for UPRTase activity.</text>
    </phDependence>
</comment>
<comment type="subunit">
    <text evidence="1">Homodimer and homohexamer; in equilibrium.</text>
</comment>
<comment type="similarity">
    <text evidence="3">Belongs to the purine/pyrimidine phosphoribosyltransferase family. PyrR subfamily.</text>
</comment>
<evidence type="ECO:0000250" key="1"/>
<evidence type="ECO:0000269" key="2">
    <source>
    </source>
</evidence>
<evidence type="ECO:0000305" key="3"/>
<sequence>MPKKEVVDAVTMKRALTRISYEIIERNKGIQDIVLVGIKTRGIYIAQRLAERLKQLEDIDVPVGELDITLYRDDVKDMEEPELHSSDVPVSIEGKEVILVDDVLYTGRTIRAAMDAVMDLGRPRKISLAVLVDRGHRELPIRADYVGKNIPTSKTEEIIVEMEERDGADRIMISKGNE</sequence>
<accession>F2MMP6</accession>
<accession>O07659</accession>
<accession>O52707</accession>
<gene>
    <name type="primary">pyrR</name>
    <name type="ordered locus">OG1RF_11432</name>
</gene>